<accession>Q8CGQ8</accession>
<accession>Q8BLL5</accession>
<accession>Q8BLL7</accession>
<protein>
    <recommendedName>
        <fullName>Sodium/potassium/calcium exchanger 4</fullName>
    </recommendedName>
    <alternativeName>
        <fullName evidence="9">Na(+)/K(+)/Ca(2+)-exchange protein 4</fullName>
    </alternativeName>
    <alternativeName>
        <fullName>Solute carrier family 24 member 4</fullName>
    </alternativeName>
</protein>
<gene>
    <name evidence="12" type="primary">Slc24a4</name>
    <name evidence="9" type="synonym">Nckx4</name>
</gene>
<proteinExistence type="evidence at protein level"/>
<feature type="signal peptide" evidence="2">
    <location>
        <begin position="1"/>
        <end position="38"/>
    </location>
</feature>
<feature type="chain" id="PRO_0000019374" description="Sodium/potassium/calcium exchanger 4">
    <location>
        <begin position="39"/>
        <end position="622"/>
    </location>
</feature>
<feature type="topological domain" description="Extracellular" evidence="11">
    <location>
        <begin position="39"/>
        <end position="97"/>
    </location>
</feature>
<feature type="transmembrane region" description="Helical" evidence="2">
    <location>
        <begin position="98"/>
        <end position="118"/>
    </location>
</feature>
<feature type="topological domain" description="Cytoplasmic" evidence="11">
    <location>
        <begin position="119"/>
        <end position="142"/>
    </location>
</feature>
<feature type="transmembrane region" description="Helical" evidence="2">
    <location>
        <begin position="143"/>
        <end position="163"/>
    </location>
</feature>
<feature type="topological domain" description="Extracellular" evidence="11">
    <location>
        <begin position="164"/>
        <end position="172"/>
    </location>
</feature>
<feature type="transmembrane region" description="Helical" evidence="2">
    <location>
        <begin position="173"/>
        <end position="193"/>
    </location>
</feature>
<feature type="topological domain" description="Cytoplasmic" evidence="11">
    <location>
        <begin position="194"/>
        <end position="200"/>
    </location>
</feature>
<feature type="transmembrane region" description="Helical" evidence="2">
    <location>
        <begin position="201"/>
        <end position="221"/>
    </location>
</feature>
<feature type="topological domain" description="Extracellular" evidence="11">
    <location>
        <begin position="222"/>
        <end position="224"/>
    </location>
</feature>
<feature type="transmembrane region" description="Helical" evidence="2">
    <location>
        <begin position="225"/>
        <end position="245"/>
    </location>
</feature>
<feature type="topological domain" description="Cytoplasmic" evidence="11">
    <location>
        <begin position="246"/>
        <end position="457"/>
    </location>
</feature>
<feature type="transmembrane region" description="Helical" evidence="2">
    <location>
        <begin position="458"/>
        <end position="478"/>
    </location>
</feature>
<feature type="topological domain" description="Extracellular" evidence="11">
    <location>
        <position position="479"/>
    </location>
</feature>
<feature type="transmembrane region" description="Helical" evidence="2">
    <location>
        <begin position="480"/>
        <end position="500"/>
    </location>
</feature>
<feature type="topological domain" description="Cytoplasmic" evidence="11">
    <location>
        <begin position="501"/>
        <end position="526"/>
    </location>
</feature>
<feature type="transmembrane region" description="Helical" evidence="2">
    <location>
        <begin position="527"/>
        <end position="547"/>
    </location>
</feature>
<feature type="topological domain" description="Extracellular" evidence="11">
    <location>
        <begin position="548"/>
        <end position="557"/>
    </location>
</feature>
<feature type="transmembrane region" description="Helical" evidence="2">
    <location>
        <begin position="558"/>
        <end position="578"/>
    </location>
</feature>
<feature type="topological domain" description="Cytoplasmic" evidence="11">
    <location>
        <begin position="579"/>
        <end position="586"/>
    </location>
</feature>
<feature type="transmembrane region" description="Helical" evidence="2">
    <location>
        <begin position="587"/>
        <end position="607"/>
    </location>
</feature>
<feature type="topological domain" description="Extracellular" evidence="11">
    <location>
        <begin position="608"/>
        <end position="622"/>
    </location>
</feature>
<feature type="repeat" description="Alpha-1">
    <location>
        <begin position="139"/>
        <end position="179"/>
    </location>
</feature>
<feature type="repeat" description="Alpha-2">
    <location>
        <begin position="495"/>
        <end position="526"/>
    </location>
</feature>
<feature type="region of interest" description="Disordered" evidence="3">
    <location>
        <begin position="358"/>
        <end position="408"/>
    </location>
</feature>
<feature type="compositionally biased region" description="Pro residues" evidence="3">
    <location>
        <begin position="394"/>
        <end position="404"/>
    </location>
</feature>
<feature type="glycosylation site" description="N-linked (GlcNAc...) asparagine" evidence="2">
    <location>
        <position position="76"/>
    </location>
</feature>
<feature type="splice variant" id="VSP_041610" description="In isoform 2." evidence="10">
    <location>
        <begin position="275"/>
        <end position="293"/>
    </location>
</feature>
<feature type="splice variant" id="VSP_041611" description="In isoform 2." evidence="10">
    <location>
        <begin position="574"/>
        <end position="622"/>
    </location>
</feature>
<feature type="sequence conflict" description="In Ref. 2; BAC31835." evidence="11" ref="2">
    <original>T</original>
    <variation>M</variation>
    <location>
        <position position="430"/>
    </location>
</feature>
<evidence type="ECO:0000250" key="1">
    <source>
        <dbReference type="UniProtKB" id="Q8NFF2"/>
    </source>
</evidence>
<evidence type="ECO:0000255" key="2"/>
<evidence type="ECO:0000256" key="3">
    <source>
        <dbReference type="SAM" id="MobiDB-lite"/>
    </source>
</evidence>
<evidence type="ECO:0000269" key="4">
    <source>
    </source>
</evidence>
<evidence type="ECO:0000269" key="5">
    <source>
    </source>
</evidence>
<evidence type="ECO:0000269" key="6">
    <source>
    </source>
</evidence>
<evidence type="ECO:0000269" key="7">
    <source>
    </source>
</evidence>
<evidence type="ECO:0000269" key="8">
    <source>
    </source>
</evidence>
<evidence type="ECO:0000303" key="9">
    <source>
    </source>
</evidence>
<evidence type="ECO:0000303" key="10">
    <source>
    </source>
</evidence>
<evidence type="ECO:0000305" key="11"/>
<evidence type="ECO:0000312" key="12">
    <source>
        <dbReference type="MGI" id="MGI:2447362"/>
    </source>
</evidence>
<organism>
    <name type="scientific">Mus musculus</name>
    <name type="common">Mouse</name>
    <dbReference type="NCBI Taxonomy" id="10090"/>
    <lineage>
        <taxon>Eukaryota</taxon>
        <taxon>Metazoa</taxon>
        <taxon>Chordata</taxon>
        <taxon>Craniata</taxon>
        <taxon>Vertebrata</taxon>
        <taxon>Euteleostomi</taxon>
        <taxon>Mammalia</taxon>
        <taxon>Eutheria</taxon>
        <taxon>Euarchontoglires</taxon>
        <taxon>Glires</taxon>
        <taxon>Rodentia</taxon>
        <taxon>Myomorpha</taxon>
        <taxon>Muroidea</taxon>
        <taxon>Muridae</taxon>
        <taxon>Murinae</taxon>
        <taxon>Mus</taxon>
        <taxon>Mus</taxon>
    </lineage>
</organism>
<sequence>MALRGLIRQSKVRRRREMLPQQVGFVCAVLALVCCASGLFGSLGHKTASAGKHVLLDTWRNRKLMAPINGTPLAKNCTDPAIHEFPTDLFSNKERQHGAVLLHILGALYMFYALAIVCDDFFVPSLEKICEKLHLSEDVAGATFMAAGSSTPELFASVIGVFITHGDVGVGTIVGSAVFNILCIIGVCGLFAGQVVRLTWWAVCRDSVYYTLSVIVLIAFIYDEEIVWWEGLVLIILYVFYILIMKYNMKMQTFFTTKQKSIANGNPVSNELEDGNDLYDGSYDDPSVPLLGQVKEKPPYGKTPVVMVDEILSSSPPKFTFPEAGLRIMITNKFGPRTRLRMASRIIINERQRLINSANGVNSKPLQNGRHENMENGNVPVENPEDPQQGQEQQPPPQPPPPEPESVETVFLSPFSMPEAKGDKAKWVFTWPLIFLLCVTIPNCSKPRWEKFFMVTFITATLWIAVFSYLMVWLVTIIGYTLGIPDVIMGITFLAAGTSVPDCMASLIVARQGLGDMAVSNTIGSNVFDILVGLGIPWGLQTMVINYGSTVKINSRGLVYSVVLLLGSVALTVLGIHLNKWRLDRKLGIYVLVLYAVFLCFSIMIEFNVFTFVNLPMCREDD</sequence>
<reference key="1">
    <citation type="journal article" date="2002" name="J. Biol. Chem.">
        <title>Molecular cloning of a fourth member of the potassium-dependent sodium-calcium exchanger gene family, NCKX4.</title>
        <authorList>
            <person name="Li X.-F."/>
            <person name="Kraev A.S."/>
            <person name="Lytton J."/>
        </authorList>
    </citation>
    <scope>NUCLEOTIDE SEQUENCE [MRNA] OF 11-622 (ISOFORM 1)</scope>
    <scope>TISSUE SPECIFICITY</scope>
    <source>
        <strain>C57BL/6J</strain>
    </source>
</reference>
<reference key="2">
    <citation type="journal article" date="2005" name="Science">
        <title>The transcriptional landscape of the mammalian genome.</title>
        <authorList>
            <person name="Carninci P."/>
            <person name="Kasukawa T."/>
            <person name="Katayama S."/>
            <person name="Gough J."/>
            <person name="Frith M.C."/>
            <person name="Maeda N."/>
            <person name="Oyama R."/>
            <person name="Ravasi T."/>
            <person name="Lenhard B."/>
            <person name="Wells C."/>
            <person name="Kodzius R."/>
            <person name="Shimokawa K."/>
            <person name="Bajic V.B."/>
            <person name="Brenner S.E."/>
            <person name="Batalov S."/>
            <person name="Forrest A.R."/>
            <person name="Zavolan M."/>
            <person name="Davis M.J."/>
            <person name="Wilming L.G."/>
            <person name="Aidinis V."/>
            <person name="Allen J.E."/>
            <person name="Ambesi-Impiombato A."/>
            <person name="Apweiler R."/>
            <person name="Aturaliya R.N."/>
            <person name="Bailey T.L."/>
            <person name="Bansal M."/>
            <person name="Baxter L."/>
            <person name="Beisel K.W."/>
            <person name="Bersano T."/>
            <person name="Bono H."/>
            <person name="Chalk A.M."/>
            <person name="Chiu K.P."/>
            <person name="Choudhary V."/>
            <person name="Christoffels A."/>
            <person name="Clutterbuck D.R."/>
            <person name="Crowe M.L."/>
            <person name="Dalla E."/>
            <person name="Dalrymple B.P."/>
            <person name="de Bono B."/>
            <person name="Della Gatta G."/>
            <person name="di Bernardo D."/>
            <person name="Down T."/>
            <person name="Engstrom P."/>
            <person name="Fagiolini M."/>
            <person name="Faulkner G."/>
            <person name="Fletcher C.F."/>
            <person name="Fukushima T."/>
            <person name="Furuno M."/>
            <person name="Futaki S."/>
            <person name="Gariboldi M."/>
            <person name="Georgii-Hemming P."/>
            <person name="Gingeras T.R."/>
            <person name="Gojobori T."/>
            <person name="Green R.E."/>
            <person name="Gustincich S."/>
            <person name="Harbers M."/>
            <person name="Hayashi Y."/>
            <person name="Hensch T.K."/>
            <person name="Hirokawa N."/>
            <person name="Hill D."/>
            <person name="Huminiecki L."/>
            <person name="Iacono M."/>
            <person name="Ikeo K."/>
            <person name="Iwama A."/>
            <person name="Ishikawa T."/>
            <person name="Jakt M."/>
            <person name="Kanapin A."/>
            <person name="Katoh M."/>
            <person name="Kawasawa Y."/>
            <person name="Kelso J."/>
            <person name="Kitamura H."/>
            <person name="Kitano H."/>
            <person name="Kollias G."/>
            <person name="Krishnan S.P."/>
            <person name="Kruger A."/>
            <person name="Kummerfeld S.K."/>
            <person name="Kurochkin I.V."/>
            <person name="Lareau L.F."/>
            <person name="Lazarevic D."/>
            <person name="Lipovich L."/>
            <person name="Liu J."/>
            <person name="Liuni S."/>
            <person name="McWilliam S."/>
            <person name="Madan Babu M."/>
            <person name="Madera M."/>
            <person name="Marchionni L."/>
            <person name="Matsuda H."/>
            <person name="Matsuzawa S."/>
            <person name="Miki H."/>
            <person name="Mignone F."/>
            <person name="Miyake S."/>
            <person name="Morris K."/>
            <person name="Mottagui-Tabar S."/>
            <person name="Mulder N."/>
            <person name="Nakano N."/>
            <person name="Nakauchi H."/>
            <person name="Ng P."/>
            <person name="Nilsson R."/>
            <person name="Nishiguchi S."/>
            <person name="Nishikawa S."/>
            <person name="Nori F."/>
            <person name="Ohara O."/>
            <person name="Okazaki Y."/>
            <person name="Orlando V."/>
            <person name="Pang K.C."/>
            <person name="Pavan W.J."/>
            <person name="Pavesi G."/>
            <person name="Pesole G."/>
            <person name="Petrovsky N."/>
            <person name="Piazza S."/>
            <person name="Reed J."/>
            <person name="Reid J.F."/>
            <person name="Ring B.Z."/>
            <person name="Ringwald M."/>
            <person name="Rost B."/>
            <person name="Ruan Y."/>
            <person name="Salzberg S.L."/>
            <person name="Sandelin A."/>
            <person name="Schneider C."/>
            <person name="Schoenbach C."/>
            <person name="Sekiguchi K."/>
            <person name="Semple C.A."/>
            <person name="Seno S."/>
            <person name="Sessa L."/>
            <person name="Sheng Y."/>
            <person name="Shibata Y."/>
            <person name="Shimada H."/>
            <person name="Shimada K."/>
            <person name="Silva D."/>
            <person name="Sinclair B."/>
            <person name="Sperling S."/>
            <person name="Stupka E."/>
            <person name="Sugiura K."/>
            <person name="Sultana R."/>
            <person name="Takenaka Y."/>
            <person name="Taki K."/>
            <person name="Tammoja K."/>
            <person name="Tan S.L."/>
            <person name="Tang S."/>
            <person name="Taylor M.S."/>
            <person name="Tegner J."/>
            <person name="Teichmann S.A."/>
            <person name="Ueda H.R."/>
            <person name="van Nimwegen E."/>
            <person name="Verardo R."/>
            <person name="Wei C.L."/>
            <person name="Yagi K."/>
            <person name="Yamanishi H."/>
            <person name="Zabarovsky E."/>
            <person name="Zhu S."/>
            <person name="Zimmer A."/>
            <person name="Hide W."/>
            <person name="Bult C."/>
            <person name="Grimmond S.M."/>
            <person name="Teasdale R.D."/>
            <person name="Liu E.T."/>
            <person name="Brusic V."/>
            <person name="Quackenbush J."/>
            <person name="Wahlestedt C."/>
            <person name="Mattick J.S."/>
            <person name="Hume D.A."/>
            <person name="Kai C."/>
            <person name="Sasaki D."/>
            <person name="Tomaru Y."/>
            <person name="Fukuda S."/>
            <person name="Kanamori-Katayama M."/>
            <person name="Suzuki M."/>
            <person name="Aoki J."/>
            <person name="Arakawa T."/>
            <person name="Iida J."/>
            <person name="Imamura K."/>
            <person name="Itoh M."/>
            <person name="Kato T."/>
            <person name="Kawaji H."/>
            <person name="Kawagashira N."/>
            <person name="Kawashima T."/>
            <person name="Kojima M."/>
            <person name="Kondo S."/>
            <person name="Konno H."/>
            <person name="Nakano K."/>
            <person name="Ninomiya N."/>
            <person name="Nishio T."/>
            <person name="Okada M."/>
            <person name="Plessy C."/>
            <person name="Shibata K."/>
            <person name="Shiraki T."/>
            <person name="Suzuki S."/>
            <person name="Tagami M."/>
            <person name="Waki K."/>
            <person name="Watahiki A."/>
            <person name="Okamura-Oho Y."/>
            <person name="Suzuki H."/>
            <person name="Kawai J."/>
            <person name="Hayashizaki Y."/>
        </authorList>
    </citation>
    <scope>NUCLEOTIDE SEQUENCE [LARGE SCALE MRNA] OF 1-573 (ISOFORM 2)</scope>
    <scope>NUCLEOTIDE SEQUENCE [LARGE SCALE MRNA] OF 1-257 (ISOFORM 1)</scope>
    <source>
        <strain>C57BL/6J</strain>
        <tissue>Retina</tissue>
    </source>
</reference>
<reference key="3">
    <citation type="journal article" date="2012" name="Cells Tissues Organs">
        <title>Expression of the sodium/calcium/potassium exchanger, NCKX4, in ameloblasts.</title>
        <authorList>
            <person name="Hu P."/>
            <person name="Lacruz R.S."/>
            <person name="Smith C.E."/>
            <person name="Smith S.M."/>
            <person name="Kurtz I."/>
            <person name="Paine M.L."/>
        </authorList>
    </citation>
    <scope>TISSUE SPECIFICITY</scope>
</reference>
<reference key="4">
    <citation type="journal article" date="2012" name="Nat. Neurosci.">
        <title>The Na(+)/Ca(2+) exchanger NCKX4 governs termination and adaptation of the mammalian olfactory response.</title>
        <authorList>
            <person name="Stephan A.B."/>
            <person name="Tobochnik S."/>
            <person name="Dibattista M."/>
            <person name="Wall C.M."/>
            <person name="Reisert J."/>
            <person name="Zhao H."/>
        </authorList>
    </citation>
    <scope>FUNCTION</scope>
    <scope>TISSUE SPECIFICITY</scope>
    <scope>DISRUPTION PHENOTYPE</scope>
</reference>
<reference key="5">
    <citation type="journal article" date="2013" name="Am. J. Hum. Genet.">
        <title>Identification of mutations in SLC24A4, encoding a potassium-dependent sodium/calcium exchanger, as a cause of amelogenesis imperfecta.</title>
        <authorList>
            <person name="Parry D.A."/>
            <person name="Poulter J.A."/>
            <person name="Logan C.V."/>
            <person name="Brookes S.J."/>
            <person name="Jafri H."/>
            <person name="Ferguson C.H."/>
            <person name="Anwari B.M."/>
            <person name="Rashid Y."/>
            <person name="Zhao H."/>
            <person name="Johnson C.A."/>
            <person name="Inglehearn C.F."/>
            <person name="Mighell A.J."/>
        </authorList>
    </citation>
    <scope>FUNCTION</scope>
    <scope>DISRUPTION PHENOTYPE</scope>
</reference>
<reference key="6">
    <citation type="journal article" date="2014" name="J. Dent. Res.">
        <title>STIM1 and SLC24A4 are critical for enamel maturation.</title>
        <authorList>
            <person name="Wang S."/>
            <person name="Choi M."/>
            <person name="Richardson A.S."/>
            <person name="Reid B.M."/>
            <person name="Seymen F."/>
            <person name="Yildirim M."/>
            <person name="Tuna E."/>
            <person name="Gencay K."/>
            <person name="Simmer J.P."/>
            <person name="Hu J.C."/>
        </authorList>
    </citation>
    <scope>SUBCELLULAR LOCATION</scope>
    <scope>TISSUE SPECIFICITY</scope>
</reference>
<reference key="7">
    <citation type="journal article" date="2015" name="Mol. Genet. Genomic Med.">
        <title>Critical roles for WDR72 in calcium transport and matrix protein removal during enamel maturation.</title>
        <authorList>
            <person name="Wang S.K."/>
            <person name="Hu Y."/>
            <person name="Yang J."/>
            <person name="Smith C.E."/>
            <person name="Nunez S.M."/>
            <person name="Richardson A.S."/>
            <person name="Pal S."/>
            <person name="Samann A.C."/>
            <person name="Hu J.C."/>
            <person name="Simmer J.P."/>
        </authorList>
    </citation>
    <scope>SUBCELLULAR LOCATION</scope>
    <scope>TISSUE SPECIFICITY</scope>
</reference>
<keyword id="KW-0025">Alternative splicing</keyword>
<keyword id="KW-0050">Antiport</keyword>
<keyword id="KW-0106">Calcium</keyword>
<keyword id="KW-0109">Calcium transport</keyword>
<keyword id="KW-1003">Cell membrane</keyword>
<keyword id="KW-0963">Cytoplasm</keyword>
<keyword id="KW-0325">Glycoprotein</keyword>
<keyword id="KW-0406">Ion transport</keyword>
<keyword id="KW-0472">Membrane</keyword>
<keyword id="KW-0552">Olfaction</keyword>
<keyword id="KW-0630">Potassium</keyword>
<keyword id="KW-0633">Potassium transport</keyword>
<keyword id="KW-1185">Reference proteome</keyword>
<keyword id="KW-0677">Repeat</keyword>
<keyword id="KW-0716">Sensory transduction</keyword>
<keyword id="KW-0732">Signal</keyword>
<keyword id="KW-0915">Sodium</keyword>
<keyword id="KW-0739">Sodium transport</keyword>
<keyword id="KW-0769">Symport</keyword>
<keyword id="KW-0812">Transmembrane</keyword>
<keyword id="KW-1133">Transmembrane helix</keyword>
<keyword id="KW-0813">Transport</keyword>
<dbReference type="EMBL" id="AY156046">
    <property type="protein sequence ID" value="AAN37415.1"/>
    <property type="status" value="ALT_INIT"/>
    <property type="molecule type" value="mRNA"/>
</dbReference>
<dbReference type="EMBL" id="AK044239">
    <property type="protein sequence ID" value="BAC31835.1"/>
    <property type="status" value="ALT_SEQ"/>
    <property type="molecule type" value="mRNA"/>
</dbReference>
<dbReference type="EMBL" id="AK044368">
    <property type="protein sequence ID" value="BAC31887.1"/>
    <property type="molecule type" value="mRNA"/>
</dbReference>
<dbReference type="CCDS" id="CCDS26117.2">
    <molecule id="Q8CGQ8-1"/>
</dbReference>
<dbReference type="RefSeq" id="NP_742164.2">
    <molecule id="Q8CGQ8-1"/>
    <property type="nucleotide sequence ID" value="NM_172152.4"/>
</dbReference>
<dbReference type="FunCoup" id="Q8CGQ8">
    <property type="interactions" value="1140"/>
</dbReference>
<dbReference type="STRING" id="10090.ENSMUSP00000157352"/>
<dbReference type="GlyCosmos" id="Q8CGQ8">
    <property type="glycosylation" value="1 site, No reported glycans"/>
</dbReference>
<dbReference type="GlyGen" id="Q8CGQ8">
    <property type="glycosylation" value="2 sites, 3 N-linked glycans (2 sites)"/>
</dbReference>
<dbReference type="iPTMnet" id="Q8CGQ8"/>
<dbReference type="PhosphoSitePlus" id="Q8CGQ8"/>
<dbReference type="PaxDb" id="10090-ENSMUSP00000078030"/>
<dbReference type="ProteomicsDB" id="252927">
    <molecule id="Q8CGQ8-1"/>
</dbReference>
<dbReference type="ProteomicsDB" id="252928">
    <molecule id="Q8CGQ8-2"/>
</dbReference>
<dbReference type="Antibodypedia" id="47402">
    <property type="antibodies" value="106 antibodies from 23 providers"/>
</dbReference>
<dbReference type="DNASU" id="238384"/>
<dbReference type="Ensembl" id="ENSMUST00000079020.12">
    <molecule id="Q8CGQ8-1"/>
    <property type="protein sequence ID" value="ENSMUSP00000078030.6"/>
    <property type="gene ID" value="ENSMUSG00000041771.15"/>
</dbReference>
<dbReference type="GeneID" id="238384"/>
<dbReference type="KEGG" id="mmu:238384"/>
<dbReference type="UCSC" id="uc007oty.1">
    <molecule id="Q8CGQ8-1"/>
    <property type="organism name" value="mouse"/>
</dbReference>
<dbReference type="AGR" id="MGI:2447362"/>
<dbReference type="CTD" id="123041"/>
<dbReference type="MGI" id="MGI:2447362">
    <property type="gene designation" value="Slc24a4"/>
</dbReference>
<dbReference type="VEuPathDB" id="HostDB:ENSMUSG00000041771"/>
<dbReference type="eggNOG" id="KOG1307">
    <property type="taxonomic scope" value="Eukaryota"/>
</dbReference>
<dbReference type="GeneTree" id="ENSGT01030000234532"/>
<dbReference type="InParanoid" id="Q8CGQ8"/>
<dbReference type="OrthoDB" id="2127281at2759"/>
<dbReference type="TreeFam" id="TF318759"/>
<dbReference type="Reactome" id="R-MMU-425561">
    <property type="pathway name" value="Sodium/Calcium exchangers"/>
</dbReference>
<dbReference type="BioGRID-ORCS" id="238384">
    <property type="hits" value="1 hit in 79 CRISPR screens"/>
</dbReference>
<dbReference type="ChiTaRS" id="Slc24a4">
    <property type="organism name" value="mouse"/>
</dbReference>
<dbReference type="PRO" id="PR:Q8CGQ8"/>
<dbReference type="Proteomes" id="UP000000589">
    <property type="component" value="Chromosome 12"/>
</dbReference>
<dbReference type="RNAct" id="Q8CGQ8">
    <property type="molecule type" value="protein"/>
</dbReference>
<dbReference type="Bgee" id="ENSMUSG00000041771">
    <property type="expression patterns" value="Expressed in retinal neural layer and 46 other cell types or tissues"/>
</dbReference>
<dbReference type="ExpressionAtlas" id="Q8CGQ8">
    <property type="expression patterns" value="baseline and differential"/>
</dbReference>
<dbReference type="GO" id="GO:0016324">
    <property type="term" value="C:apical plasma membrane"/>
    <property type="evidence" value="ECO:0000314"/>
    <property type="project" value="ARUK-UCL"/>
</dbReference>
<dbReference type="GO" id="GO:0120199">
    <property type="term" value="C:cone photoreceptor outer segment"/>
    <property type="evidence" value="ECO:0000314"/>
    <property type="project" value="ARUK-UCL"/>
</dbReference>
<dbReference type="GO" id="GO:0005737">
    <property type="term" value="C:cytoplasm"/>
    <property type="evidence" value="ECO:0000314"/>
    <property type="project" value="UniProtKB"/>
</dbReference>
<dbReference type="GO" id="GO:0016020">
    <property type="term" value="C:membrane"/>
    <property type="evidence" value="ECO:0000314"/>
    <property type="project" value="UniProtKB"/>
</dbReference>
<dbReference type="GO" id="GO:0005886">
    <property type="term" value="C:plasma membrane"/>
    <property type="evidence" value="ECO:0000314"/>
    <property type="project" value="ARUK-UCL"/>
</dbReference>
<dbReference type="GO" id="GO:0031982">
    <property type="term" value="C:vesicle"/>
    <property type="evidence" value="ECO:0000314"/>
    <property type="project" value="ARUK-UCL"/>
</dbReference>
<dbReference type="GO" id="GO:0008273">
    <property type="term" value="F:calcium, potassium:sodium antiporter activity"/>
    <property type="evidence" value="ECO:0000314"/>
    <property type="project" value="ARUK-UCL"/>
</dbReference>
<dbReference type="GO" id="GO:0048306">
    <property type="term" value="F:calcium-dependent protein binding"/>
    <property type="evidence" value="ECO:0000353"/>
    <property type="project" value="ARUK-UCL"/>
</dbReference>
<dbReference type="GO" id="GO:0005432">
    <property type="term" value="F:calcium:sodium antiporter activity"/>
    <property type="evidence" value="ECO:0000247"/>
    <property type="project" value="MGI"/>
</dbReference>
<dbReference type="GO" id="GO:0005516">
    <property type="term" value="F:calmodulin binding"/>
    <property type="evidence" value="ECO:0000353"/>
    <property type="project" value="ARUK-UCL"/>
</dbReference>
<dbReference type="GO" id="GO:0015293">
    <property type="term" value="F:symporter activity"/>
    <property type="evidence" value="ECO:0007669"/>
    <property type="project" value="UniProtKB-KW"/>
</dbReference>
<dbReference type="GO" id="GO:0097186">
    <property type="term" value="P:amelogenesis"/>
    <property type="evidence" value="ECO:0000315"/>
    <property type="project" value="UniProtKB"/>
</dbReference>
<dbReference type="GO" id="GO:1990034">
    <property type="term" value="P:calcium ion export across plasma membrane"/>
    <property type="evidence" value="ECO:0000314"/>
    <property type="project" value="ARUK-UCL"/>
</dbReference>
<dbReference type="GO" id="GO:0055074">
    <property type="term" value="P:calcium ion homeostasis"/>
    <property type="evidence" value="ECO:0000315"/>
    <property type="project" value="ARUK-UCL"/>
</dbReference>
<dbReference type="GO" id="GO:0098703">
    <property type="term" value="P:calcium ion import across plasma membrane"/>
    <property type="evidence" value="ECO:0000314"/>
    <property type="project" value="ARUK-UCL"/>
</dbReference>
<dbReference type="GO" id="GO:0071486">
    <property type="term" value="P:cellular response to high light intensity"/>
    <property type="evidence" value="ECO:0000315"/>
    <property type="project" value="ARUK-UCL"/>
</dbReference>
<dbReference type="GO" id="GO:0036368">
    <property type="term" value="P:cone photoresponse recovery"/>
    <property type="evidence" value="ECO:0000315"/>
    <property type="project" value="ARUK-UCL"/>
</dbReference>
<dbReference type="GO" id="GO:0050911">
    <property type="term" value="P:detection of chemical stimulus involved in sensory perception of smell"/>
    <property type="evidence" value="ECO:0000315"/>
    <property type="project" value="ARUK-UCL"/>
</dbReference>
<dbReference type="GO" id="GO:0042756">
    <property type="term" value="P:drinking behavior"/>
    <property type="evidence" value="ECO:0000315"/>
    <property type="project" value="ARUK-UCL"/>
</dbReference>
<dbReference type="GO" id="GO:0006874">
    <property type="term" value="P:intracellular calcium ion homeostasis"/>
    <property type="evidence" value="ECO:0007669"/>
    <property type="project" value="Ensembl"/>
</dbReference>
<dbReference type="GO" id="GO:0086009">
    <property type="term" value="P:membrane repolarization"/>
    <property type="evidence" value="ECO:0000315"/>
    <property type="project" value="ARUK-UCL"/>
</dbReference>
<dbReference type="GO" id="GO:0050849">
    <property type="term" value="P:negative regulation of calcium-mediated signaling"/>
    <property type="evidence" value="ECO:0000314"/>
    <property type="project" value="ARUK-UCL"/>
</dbReference>
<dbReference type="GO" id="GO:0021630">
    <property type="term" value="P:olfactory nerve maturation"/>
    <property type="evidence" value="ECO:0000315"/>
    <property type="project" value="ARUK-UCL"/>
</dbReference>
<dbReference type="GO" id="GO:0007602">
    <property type="term" value="P:phototransduction"/>
    <property type="evidence" value="ECO:0000315"/>
    <property type="project" value="ARUK-UCL"/>
</dbReference>
<dbReference type="GO" id="GO:0010628">
    <property type="term" value="P:positive regulation of gene expression"/>
    <property type="evidence" value="ECO:0000315"/>
    <property type="project" value="ARUK-UCL"/>
</dbReference>
<dbReference type="GO" id="GO:1903998">
    <property type="term" value="P:regulation of eating behavior"/>
    <property type="evidence" value="ECO:0000315"/>
    <property type="project" value="ARUK-UCL"/>
</dbReference>
<dbReference type="GO" id="GO:0008277">
    <property type="term" value="P:regulation of G protein-coupled receptor signaling pathway"/>
    <property type="evidence" value="ECO:0000315"/>
    <property type="project" value="ARUK-UCL"/>
</dbReference>
<dbReference type="GO" id="GO:1990680">
    <property type="term" value="P:response to melanocyte-stimulating hormone"/>
    <property type="evidence" value="ECO:0000315"/>
    <property type="project" value="ARUK-UCL"/>
</dbReference>
<dbReference type="GO" id="GO:1990834">
    <property type="term" value="P:response to odorant"/>
    <property type="evidence" value="ECO:0000315"/>
    <property type="project" value="ARUK-UCL"/>
</dbReference>
<dbReference type="GO" id="GO:0007608">
    <property type="term" value="P:sensory perception of smell"/>
    <property type="evidence" value="ECO:0000315"/>
    <property type="project" value="UniProtKB"/>
</dbReference>
<dbReference type="FunFam" id="1.20.1420.30:FF:000005">
    <property type="entry name" value="sodium/potassium/calcium exchanger 3 isoform X1"/>
    <property type="match status" value="1"/>
</dbReference>
<dbReference type="FunFam" id="1.20.1420.30:FF:000006">
    <property type="entry name" value="sodium/potassium/calcium exchanger 4 isoform X1"/>
    <property type="match status" value="1"/>
</dbReference>
<dbReference type="Gene3D" id="1.20.1420.30">
    <property type="entry name" value="NCX, central ion-binding region"/>
    <property type="match status" value="2"/>
</dbReference>
<dbReference type="InterPro" id="IPR004481">
    <property type="entry name" value="K/Na/Ca-exchanger"/>
</dbReference>
<dbReference type="InterPro" id="IPR004837">
    <property type="entry name" value="NaCa_Exmemb"/>
</dbReference>
<dbReference type="InterPro" id="IPR044880">
    <property type="entry name" value="NCX_ion-bd_dom_sf"/>
</dbReference>
<dbReference type="NCBIfam" id="TIGR00367">
    <property type="entry name" value="calcium/sodium antiporter"/>
    <property type="match status" value="1"/>
</dbReference>
<dbReference type="PANTHER" id="PTHR10846">
    <property type="entry name" value="SODIUM/POTASSIUM/CALCIUM EXCHANGER"/>
    <property type="match status" value="1"/>
</dbReference>
<dbReference type="PANTHER" id="PTHR10846:SF21">
    <property type="entry name" value="SODIUM_POTASSIUM_CALCIUM EXCHANGER 4"/>
    <property type="match status" value="1"/>
</dbReference>
<dbReference type="Pfam" id="PF01699">
    <property type="entry name" value="Na_Ca_ex"/>
    <property type="match status" value="2"/>
</dbReference>
<comment type="function">
    <text evidence="4 6">Calcium, potassium:sodium antiporter that transports 1 Ca(2+) and 1 K(+) in exchange for 4 Na(+) (PubMed:22057188). Controls the rapid response termination and proper regulation of adaptation in olfactory sensory neurons (OSNs) which subsequently influences how odor information is encoded and perceived (PubMed:22057188). May play a role in calcium transport during amelogenesis (PubMed:23375655).</text>
</comment>
<comment type="catalytic activity">
    <reaction evidence="1">
        <text>Ca(2+)(out) + K(+)(out) + 4 Na(+)(in) = Ca(2+)(in) + K(+)(in) + 4 Na(+)(out)</text>
        <dbReference type="Rhea" id="RHEA:69967"/>
        <dbReference type="ChEBI" id="CHEBI:29101"/>
        <dbReference type="ChEBI" id="CHEBI:29103"/>
        <dbReference type="ChEBI" id="CHEBI:29108"/>
    </reaction>
</comment>
<comment type="subcellular location">
    <subcellularLocation>
        <location evidence="7 8">Cell membrane</location>
        <topology evidence="2">Multi-pass membrane protein</topology>
    </subcellularLocation>
    <subcellularLocation>
        <location evidence="7 8">Cytoplasm</location>
    </subcellularLocation>
</comment>
<comment type="alternative products">
    <event type="alternative splicing"/>
    <isoform>
        <id>Q8CGQ8-1</id>
        <name>1</name>
        <sequence type="displayed"/>
    </isoform>
    <isoform>
        <id>Q8CGQ8-2</id>
        <name>2</name>
        <sequence type="described" ref="VSP_041610 VSP_041611"/>
    </isoform>
</comment>
<comment type="tissue specificity">
    <text evidence="4 5 7 8">Expressed in late secretory-stage and maturation-stage ameloblasts, with significantly increased expression during the late stages of amelogenesis (at protein level) (PubMed:22677781, PubMed:24621671, PubMed:26247047). Widely expressed in most regions of the brain, including hippocampus, neocortex, thalamus, striatum and olfactory bulb (PubMed:12379639). Expressed in the olfactory sensory neurons (PubMed:22057188).</text>
</comment>
<comment type="disruption phenotype">
    <text evidence="4 6">Mice have a reduced ability to locate an odorous source and lower body weights. The olfactory sensory neurons display defects in response termination and adaptation but have unchanged sensitivity (PubMed:22057188). Mice show severe enamel defects (PubMed:23375655).</text>
</comment>
<comment type="similarity">
    <text evidence="11">Belongs to the Ca(2+):cation antiporter (CaCA) (TC 2.A.19) family. SLC24A subfamily.</text>
</comment>
<comment type="caution">
    <text evidence="11">It is uncertain whether Met-1 or Met-18 is the initiator.</text>
</comment>
<comment type="sequence caution" evidence="11">
    <conflict type="erroneous initiation">
        <sequence resource="EMBL-CDS" id="AAN37415"/>
    </conflict>
    <text>Truncated N-terminus.</text>
</comment>
<comment type="sequence caution" evidence="11">
    <conflict type="frameshift">
        <sequence resource="EMBL-CDS" id="BAC31835"/>
    </conflict>
</comment>
<comment type="sequence caution" evidence="11">
    <conflict type="miscellaneous discrepancy">
        <sequence resource="EMBL-CDS" id="BAC31835"/>
    </conflict>
    <text>Probable cloning artifact.</text>
</comment>
<name>NCKX4_MOUSE</name>